<proteinExistence type="inferred from homology"/>
<feature type="chain" id="PRO_1000076854" description="Pantothenate synthetase">
    <location>
        <begin position="1"/>
        <end position="281"/>
    </location>
</feature>
<feature type="active site" description="Proton donor" evidence="1">
    <location>
        <position position="38"/>
    </location>
</feature>
<feature type="binding site" evidence="1">
    <location>
        <begin position="31"/>
        <end position="38"/>
    </location>
    <ligand>
        <name>ATP</name>
        <dbReference type="ChEBI" id="CHEBI:30616"/>
    </ligand>
</feature>
<feature type="binding site" evidence="1">
    <location>
        <position position="62"/>
    </location>
    <ligand>
        <name>(R)-pantoate</name>
        <dbReference type="ChEBI" id="CHEBI:15980"/>
    </ligand>
</feature>
<feature type="binding site" evidence="1">
    <location>
        <position position="62"/>
    </location>
    <ligand>
        <name>beta-alanine</name>
        <dbReference type="ChEBI" id="CHEBI:57966"/>
    </ligand>
</feature>
<feature type="binding site" evidence="1">
    <location>
        <begin position="148"/>
        <end position="151"/>
    </location>
    <ligand>
        <name>ATP</name>
        <dbReference type="ChEBI" id="CHEBI:30616"/>
    </ligand>
</feature>
<feature type="binding site" evidence="1">
    <location>
        <position position="154"/>
    </location>
    <ligand>
        <name>(R)-pantoate</name>
        <dbReference type="ChEBI" id="CHEBI:15980"/>
    </ligand>
</feature>
<feature type="binding site" evidence="1">
    <location>
        <position position="177"/>
    </location>
    <ligand>
        <name>ATP</name>
        <dbReference type="ChEBI" id="CHEBI:30616"/>
    </ligand>
</feature>
<feature type="binding site" evidence="1">
    <location>
        <begin position="185"/>
        <end position="188"/>
    </location>
    <ligand>
        <name>ATP</name>
        <dbReference type="ChEBI" id="CHEBI:30616"/>
    </ligand>
</feature>
<evidence type="ECO:0000255" key="1">
    <source>
        <dbReference type="HAMAP-Rule" id="MF_00158"/>
    </source>
</evidence>
<comment type="function">
    <text evidence="1">Catalyzes the condensation of pantoate with beta-alanine in an ATP-dependent reaction via a pantoyl-adenylate intermediate.</text>
</comment>
<comment type="catalytic activity">
    <reaction evidence="1">
        <text>(R)-pantoate + beta-alanine + ATP = (R)-pantothenate + AMP + diphosphate + H(+)</text>
        <dbReference type="Rhea" id="RHEA:10912"/>
        <dbReference type="ChEBI" id="CHEBI:15378"/>
        <dbReference type="ChEBI" id="CHEBI:15980"/>
        <dbReference type="ChEBI" id="CHEBI:29032"/>
        <dbReference type="ChEBI" id="CHEBI:30616"/>
        <dbReference type="ChEBI" id="CHEBI:33019"/>
        <dbReference type="ChEBI" id="CHEBI:57966"/>
        <dbReference type="ChEBI" id="CHEBI:456215"/>
        <dbReference type="EC" id="6.3.2.1"/>
    </reaction>
</comment>
<comment type="pathway">
    <text evidence="1">Cofactor biosynthesis; (R)-pantothenate biosynthesis; (R)-pantothenate from (R)-pantoate and beta-alanine: step 1/1.</text>
</comment>
<comment type="subunit">
    <text evidence="1">Homodimer.</text>
</comment>
<comment type="subcellular location">
    <subcellularLocation>
        <location evidence="1">Cytoplasm</location>
    </subcellularLocation>
</comment>
<comment type="miscellaneous">
    <text evidence="1">The reaction proceeds by a bi uni uni bi ping pong mechanism.</text>
</comment>
<comment type="similarity">
    <text evidence="1">Belongs to the pantothenate synthetase family.</text>
</comment>
<accession>A8LKA2</accession>
<sequence length="281" mass="30054">MTDVMRDVASLRMLQGMWRRAGETVGLVPTMGALHDGHMALARAAREECGKVIATIFVNPTQFGPTEDLDAYPNTFDSDLHMLREVGVDVVFAPTRDVMYPAGFGTTVKVAGLTAPLCGAARPGHFDGVTQVVAKLLNLGQADRAYFGQKDWQQLAVVRQMVRDLNFPTEIVGIPTVRAEDGLALSSRNAYLTEAEREIAPILYRTIRDAAARVAAGHGATGVCEAAARGLLGKGFTRIDYLECRDATTLAPAETPDPGTARIFVAAQLGGARLIDNVSVG</sequence>
<keyword id="KW-0067">ATP-binding</keyword>
<keyword id="KW-0963">Cytoplasm</keyword>
<keyword id="KW-0436">Ligase</keyword>
<keyword id="KW-0547">Nucleotide-binding</keyword>
<keyword id="KW-0566">Pantothenate biosynthesis</keyword>
<keyword id="KW-1185">Reference proteome</keyword>
<reference key="1">
    <citation type="journal article" date="2010" name="ISME J.">
        <title>The complete genome sequence of the algal symbiont Dinoroseobacter shibae: a hitchhiker's guide to life in the sea.</title>
        <authorList>
            <person name="Wagner-Dobler I."/>
            <person name="Ballhausen B."/>
            <person name="Berger M."/>
            <person name="Brinkhoff T."/>
            <person name="Buchholz I."/>
            <person name="Bunk B."/>
            <person name="Cypionka H."/>
            <person name="Daniel R."/>
            <person name="Drepper T."/>
            <person name="Gerdts G."/>
            <person name="Hahnke S."/>
            <person name="Han C."/>
            <person name="Jahn D."/>
            <person name="Kalhoefer D."/>
            <person name="Kiss H."/>
            <person name="Klenk H.P."/>
            <person name="Kyrpides N."/>
            <person name="Liebl W."/>
            <person name="Liesegang H."/>
            <person name="Meincke L."/>
            <person name="Pati A."/>
            <person name="Petersen J."/>
            <person name="Piekarski T."/>
            <person name="Pommerenke C."/>
            <person name="Pradella S."/>
            <person name="Pukall R."/>
            <person name="Rabus R."/>
            <person name="Stackebrandt E."/>
            <person name="Thole S."/>
            <person name="Thompson L."/>
            <person name="Tielen P."/>
            <person name="Tomasch J."/>
            <person name="von Jan M."/>
            <person name="Wanphrut N."/>
            <person name="Wichels A."/>
            <person name="Zech H."/>
            <person name="Simon M."/>
        </authorList>
    </citation>
    <scope>NUCLEOTIDE SEQUENCE [LARGE SCALE GENOMIC DNA]</scope>
    <source>
        <strain>DSM 16493 / NCIMB 14021 / DFL 12</strain>
    </source>
</reference>
<dbReference type="EC" id="6.3.2.1" evidence="1"/>
<dbReference type="EMBL" id="CP000830">
    <property type="protein sequence ID" value="ABV94685.1"/>
    <property type="molecule type" value="Genomic_DNA"/>
</dbReference>
<dbReference type="RefSeq" id="WP_012179613.1">
    <property type="nucleotide sequence ID" value="NC_009952.1"/>
</dbReference>
<dbReference type="SMR" id="A8LKA2"/>
<dbReference type="STRING" id="398580.Dshi_2952"/>
<dbReference type="KEGG" id="dsh:Dshi_2952"/>
<dbReference type="eggNOG" id="COG0414">
    <property type="taxonomic scope" value="Bacteria"/>
</dbReference>
<dbReference type="HOGENOM" id="CLU_047148_0_0_5"/>
<dbReference type="OrthoDB" id="9773087at2"/>
<dbReference type="UniPathway" id="UPA00028">
    <property type="reaction ID" value="UER00005"/>
</dbReference>
<dbReference type="Proteomes" id="UP000006833">
    <property type="component" value="Chromosome"/>
</dbReference>
<dbReference type="GO" id="GO:0005829">
    <property type="term" value="C:cytosol"/>
    <property type="evidence" value="ECO:0007669"/>
    <property type="project" value="TreeGrafter"/>
</dbReference>
<dbReference type="GO" id="GO:0005524">
    <property type="term" value="F:ATP binding"/>
    <property type="evidence" value="ECO:0007669"/>
    <property type="project" value="UniProtKB-KW"/>
</dbReference>
<dbReference type="GO" id="GO:0004592">
    <property type="term" value="F:pantoate-beta-alanine ligase activity"/>
    <property type="evidence" value="ECO:0007669"/>
    <property type="project" value="UniProtKB-UniRule"/>
</dbReference>
<dbReference type="GO" id="GO:0015940">
    <property type="term" value="P:pantothenate biosynthetic process"/>
    <property type="evidence" value="ECO:0007669"/>
    <property type="project" value="UniProtKB-UniRule"/>
</dbReference>
<dbReference type="CDD" id="cd00560">
    <property type="entry name" value="PanC"/>
    <property type="match status" value="1"/>
</dbReference>
<dbReference type="FunFam" id="3.40.50.620:FF:000114">
    <property type="entry name" value="Pantothenate synthetase"/>
    <property type="match status" value="1"/>
</dbReference>
<dbReference type="Gene3D" id="3.40.50.620">
    <property type="entry name" value="HUPs"/>
    <property type="match status" value="1"/>
</dbReference>
<dbReference type="Gene3D" id="3.30.1300.10">
    <property type="entry name" value="Pantoate-beta-alanine ligase, C-terminal domain"/>
    <property type="match status" value="1"/>
</dbReference>
<dbReference type="HAMAP" id="MF_00158">
    <property type="entry name" value="PanC"/>
    <property type="match status" value="1"/>
</dbReference>
<dbReference type="InterPro" id="IPR003721">
    <property type="entry name" value="Pantoate_ligase"/>
</dbReference>
<dbReference type="InterPro" id="IPR042176">
    <property type="entry name" value="Pantoate_ligase_C"/>
</dbReference>
<dbReference type="InterPro" id="IPR014729">
    <property type="entry name" value="Rossmann-like_a/b/a_fold"/>
</dbReference>
<dbReference type="NCBIfam" id="TIGR00018">
    <property type="entry name" value="panC"/>
    <property type="match status" value="1"/>
</dbReference>
<dbReference type="PANTHER" id="PTHR21299">
    <property type="entry name" value="CYTIDYLATE KINASE/PANTOATE-BETA-ALANINE LIGASE"/>
    <property type="match status" value="1"/>
</dbReference>
<dbReference type="PANTHER" id="PTHR21299:SF1">
    <property type="entry name" value="PANTOATE--BETA-ALANINE LIGASE"/>
    <property type="match status" value="1"/>
</dbReference>
<dbReference type="Pfam" id="PF02569">
    <property type="entry name" value="Pantoate_ligase"/>
    <property type="match status" value="1"/>
</dbReference>
<dbReference type="SUPFAM" id="SSF52374">
    <property type="entry name" value="Nucleotidylyl transferase"/>
    <property type="match status" value="1"/>
</dbReference>
<protein>
    <recommendedName>
        <fullName evidence="1">Pantothenate synthetase</fullName>
        <shortName evidence="1">PS</shortName>
        <ecNumber evidence="1">6.3.2.1</ecNumber>
    </recommendedName>
    <alternativeName>
        <fullName evidence="1">Pantoate--beta-alanine ligase</fullName>
    </alternativeName>
    <alternativeName>
        <fullName evidence="1">Pantoate-activating enzyme</fullName>
    </alternativeName>
</protein>
<name>PANC_DINSH</name>
<organism>
    <name type="scientific">Dinoroseobacter shibae (strain DSM 16493 / NCIMB 14021 / DFL 12)</name>
    <dbReference type="NCBI Taxonomy" id="398580"/>
    <lineage>
        <taxon>Bacteria</taxon>
        <taxon>Pseudomonadati</taxon>
        <taxon>Pseudomonadota</taxon>
        <taxon>Alphaproteobacteria</taxon>
        <taxon>Rhodobacterales</taxon>
        <taxon>Roseobacteraceae</taxon>
        <taxon>Dinoroseobacter</taxon>
    </lineage>
</organism>
<gene>
    <name evidence="1" type="primary">panC</name>
    <name type="ordered locus">Dshi_2952</name>
</gene>